<evidence type="ECO:0000255" key="1">
    <source>
        <dbReference type="HAMAP-Rule" id="MF_01224"/>
    </source>
</evidence>
<comment type="function">
    <text evidence="1">Catalyzes the conversion of (8S)-3',8-cyclo-7,8-dihydroguanosine 5'-triphosphate to cyclic pyranopterin monophosphate (cPMP).</text>
</comment>
<comment type="catalytic activity">
    <reaction evidence="1">
        <text>(8S)-3',8-cyclo-7,8-dihydroguanosine 5'-triphosphate = cyclic pyranopterin phosphate + diphosphate</text>
        <dbReference type="Rhea" id="RHEA:49580"/>
        <dbReference type="ChEBI" id="CHEBI:33019"/>
        <dbReference type="ChEBI" id="CHEBI:59648"/>
        <dbReference type="ChEBI" id="CHEBI:131766"/>
        <dbReference type="EC" id="4.6.1.17"/>
    </reaction>
</comment>
<comment type="pathway">
    <text evidence="1">Cofactor biosynthesis; molybdopterin biosynthesis.</text>
</comment>
<comment type="subunit">
    <text evidence="1">Homohexamer; trimer of dimers.</text>
</comment>
<comment type="similarity">
    <text evidence="1">Belongs to the MoaC family.</text>
</comment>
<proteinExistence type="inferred from homology"/>
<reference key="1">
    <citation type="submission" date="2007-05" db="EMBL/GenBank/DDBJ databases">
        <title>Complete sequence of chromosome of Staphylococcus aureus subsp. aureus JH9.</title>
        <authorList>
            <consortium name="US DOE Joint Genome Institute"/>
            <person name="Copeland A."/>
            <person name="Lucas S."/>
            <person name="Lapidus A."/>
            <person name="Barry K."/>
            <person name="Detter J.C."/>
            <person name="Glavina del Rio T."/>
            <person name="Hammon N."/>
            <person name="Israni S."/>
            <person name="Pitluck S."/>
            <person name="Chain P."/>
            <person name="Malfatti S."/>
            <person name="Shin M."/>
            <person name="Vergez L."/>
            <person name="Schmutz J."/>
            <person name="Larimer F."/>
            <person name="Land M."/>
            <person name="Hauser L."/>
            <person name="Kyrpides N."/>
            <person name="Kim E."/>
            <person name="Tomasz A."/>
            <person name="Richardson P."/>
        </authorList>
    </citation>
    <scope>NUCLEOTIDE SEQUENCE [LARGE SCALE GENOMIC DNA]</scope>
    <source>
        <strain>JH9</strain>
    </source>
</reference>
<accession>A5IV56</accession>
<gene>
    <name evidence="1" type="primary">moaC</name>
    <name type="ordered locus">SaurJH9_2299</name>
</gene>
<name>MOAC_STAA9</name>
<feature type="chain" id="PRO_1000085689" description="Cyclic pyranopterin monophosphate synthase">
    <location>
        <begin position="1"/>
        <end position="164"/>
    </location>
</feature>
<feature type="active site" evidence="1">
    <location>
        <position position="131"/>
    </location>
</feature>
<feature type="binding site" evidence="1">
    <location>
        <begin position="75"/>
        <end position="77"/>
    </location>
    <ligand>
        <name>substrate</name>
    </ligand>
</feature>
<feature type="binding site" evidence="1">
    <location>
        <begin position="116"/>
        <end position="117"/>
    </location>
    <ligand>
        <name>substrate</name>
    </ligand>
</feature>
<organism>
    <name type="scientific">Staphylococcus aureus (strain JH9)</name>
    <dbReference type="NCBI Taxonomy" id="359786"/>
    <lineage>
        <taxon>Bacteria</taxon>
        <taxon>Bacillati</taxon>
        <taxon>Bacillota</taxon>
        <taxon>Bacilli</taxon>
        <taxon>Bacillales</taxon>
        <taxon>Staphylococcaceae</taxon>
        <taxon>Staphylococcus</taxon>
    </lineage>
</organism>
<dbReference type="EC" id="4.6.1.17" evidence="1"/>
<dbReference type="EMBL" id="CP000703">
    <property type="protein sequence ID" value="ABQ50079.1"/>
    <property type="molecule type" value="Genomic_DNA"/>
</dbReference>
<dbReference type="RefSeq" id="WP_000134526.1">
    <property type="nucleotide sequence ID" value="NC_009487.1"/>
</dbReference>
<dbReference type="SMR" id="A5IV56"/>
<dbReference type="KEGG" id="saj:SaurJH9_2299"/>
<dbReference type="HOGENOM" id="CLU_074693_1_1_9"/>
<dbReference type="UniPathway" id="UPA00344"/>
<dbReference type="GO" id="GO:0061799">
    <property type="term" value="F:cyclic pyranopterin monophosphate synthase activity"/>
    <property type="evidence" value="ECO:0007669"/>
    <property type="project" value="UniProtKB-UniRule"/>
</dbReference>
<dbReference type="GO" id="GO:0006777">
    <property type="term" value="P:Mo-molybdopterin cofactor biosynthetic process"/>
    <property type="evidence" value="ECO:0007669"/>
    <property type="project" value="UniProtKB-UniRule"/>
</dbReference>
<dbReference type="CDD" id="cd01420">
    <property type="entry name" value="MoaC_PE"/>
    <property type="match status" value="1"/>
</dbReference>
<dbReference type="Gene3D" id="3.30.70.640">
    <property type="entry name" value="Molybdopterin cofactor biosynthesis C (MoaC) domain"/>
    <property type="match status" value="1"/>
</dbReference>
<dbReference type="HAMAP" id="MF_01224_B">
    <property type="entry name" value="MoaC_B"/>
    <property type="match status" value="1"/>
</dbReference>
<dbReference type="InterPro" id="IPR023045">
    <property type="entry name" value="MoaC"/>
</dbReference>
<dbReference type="InterPro" id="IPR047594">
    <property type="entry name" value="MoaC_bact/euk"/>
</dbReference>
<dbReference type="InterPro" id="IPR036522">
    <property type="entry name" value="MoaC_sf"/>
</dbReference>
<dbReference type="InterPro" id="IPR050105">
    <property type="entry name" value="MoCo_biosynth_MoaA/MoaC"/>
</dbReference>
<dbReference type="InterPro" id="IPR002820">
    <property type="entry name" value="Mopterin_CF_biosynth-C_dom"/>
</dbReference>
<dbReference type="NCBIfam" id="TIGR00581">
    <property type="entry name" value="moaC"/>
    <property type="match status" value="1"/>
</dbReference>
<dbReference type="NCBIfam" id="NF006870">
    <property type="entry name" value="PRK09364.1"/>
    <property type="match status" value="1"/>
</dbReference>
<dbReference type="PANTHER" id="PTHR22960">
    <property type="entry name" value="MOLYBDOPTERIN COFACTOR SYNTHESIS PROTEIN A"/>
    <property type="match status" value="1"/>
</dbReference>
<dbReference type="Pfam" id="PF01967">
    <property type="entry name" value="MoaC"/>
    <property type="match status" value="1"/>
</dbReference>
<dbReference type="SUPFAM" id="SSF55040">
    <property type="entry name" value="Molybdenum cofactor biosynthesis protein C, MoaC"/>
    <property type="match status" value="1"/>
</dbReference>
<protein>
    <recommendedName>
        <fullName evidence="1">Cyclic pyranopterin monophosphate synthase</fullName>
        <ecNumber evidence="1">4.6.1.17</ecNumber>
    </recommendedName>
    <alternativeName>
        <fullName evidence="1">Molybdenum cofactor biosynthesis protein C</fullName>
    </alternativeName>
</protein>
<sequence>MTEFTHINQQGHAKMVDVSDKQITKRTAVAHSSITVNETIFKQISNNTNTKGNVLNTAQIAGIMAAKNTSTIIPMCHPLPLTGIDVHFSWDETNAPLYTLNIQTTVSTTGKTGVEMEALTAASATALTIYDMTKAVDKGMIIGETYLESKSGGKSGDFQRQSGQ</sequence>
<keyword id="KW-0456">Lyase</keyword>
<keyword id="KW-0501">Molybdenum cofactor biosynthesis</keyword>